<keyword id="KW-0025">Alternative splicing</keyword>
<keyword id="KW-1003">Cell membrane</keyword>
<keyword id="KW-0966">Cell projection</keyword>
<keyword id="KW-0868">Chloride</keyword>
<keyword id="KW-0869">Chloride channel</keyword>
<keyword id="KW-1015">Disulfide bond</keyword>
<keyword id="KW-0325">Glycoprotein</keyword>
<keyword id="KW-0407">Ion channel</keyword>
<keyword id="KW-0406">Ion transport</keyword>
<keyword id="KW-1071">Ligand-gated ion channel</keyword>
<keyword id="KW-0472">Membrane</keyword>
<keyword id="KW-0479">Metal-binding</keyword>
<keyword id="KW-0628">Postsynaptic cell membrane</keyword>
<keyword id="KW-0675">Receptor</keyword>
<keyword id="KW-1185">Reference proteome</keyword>
<keyword id="KW-0732">Signal</keyword>
<keyword id="KW-0770">Synapse</keyword>
<keyword id="KW-0812">Transmembrane</keyword>
<keyword id="KW-1133">Transmembrane helix</keyword>
<keyword id="KW-0813">Transport</keyword>
<keyword id="KW-0862">Zinc</keyword>
<organism>
    <name type="scientific">Bos taurus</name>
    <name type="common">Bovine</name>
    <dbReference type="NCBI Taxonomy" id="9913"/>
    <lineage>
        <taxon>Eukaryota</taxon>
        <taxon>Metazoa</taxon>
        <taxon>Chordata</taxon>
        <taxon>Craniata</taxon>
        <taxon>Vertebrata</taxon>
        <taxon>Euteleostomi</taxon>
        <taxon>Mammalia</taxon>
        <taxon>Eutheria</taxon>
        <taxon>Laurasiatheria</taxon>
        <taxon>Artiodactyla</taxon>
        <taxon>Ruminantia</taxon>
        <taxon>Pecora</taxon>
        <taxon>Bovidae</taxon>
        <taxon>Bovinae</taxon>
        <taxon>Bos</taxon>
    </lineage>
</organism>
<comment type="function">
    <text evidence="3 4 7">Subunit of heteromeric glycine-gated chloride channels (PubMed:11178872). Plays an important role in the down-regulation of neuronal excitability. Contributes to the generation of inhibitory postsynaptic currents (PubMed:11178872). Channel activity is potentiated by ethanol (By similarity). Potentiation of channel activity by intoxicating levels of ethanol contribute to the sedative effects of ethanol (By similarity).</text>
</comment>
<comment type="catalytic activity">
    <reaction evidence="3">
        <text>chloride(in) = chloride(out)</text>
        <dbReference type="Rhea" id="RHEA:29823"/>
        <dbReference type="ChEBI" id="CHEBI:17996"/>
    </reaction>
</comment>
<comment type="activity regulation">
    <text evidence="3">Channel opening is triggered by extracellular glycine. Channel characteristics depend on the subunit composition; heteropentameric channels are activated by lower glycine levels and display faster desensitization.</text>
</comment>
<comment type="subunit">
    <text evidence="3">Interacts with GLRB to form heteropentameric channels; this is probably the predominant form in vivo. Heteropentamer composed of four GLRA1 subunits and one GLRB subunit. Heteropentamer composed of two GLRA1 and three GLRB. Heteropentamer composed of three GLRA1 and two GLRB. Homopentamer (in vitro). Both homopentamers and heteropentamers form functional ion channels, but their characteristics are subtly different.</text>
</comment>
<comment type="subcellular location">
    <subcellularLocation>
        <location evidence="4">Postsynaptic cell membrane</location>
        <topology evidence="4">Multi-pass membrane protein</topology>
    </subcellularLocation>
    <subcellularLocation>
        <location evidence="4">Synapse</location>
    </subcellularLocation>
    <subcellularLocation>
        <location evidence="7">Perikaryon</location>
    </subcellularLocation>
    <subcellularLocation>
        <location evidence="4">Cell projection</location>
        <location evidence="4">Dendrite</location>
    </subcellularLocation>
    <subcellularLocation>
        <location evidence="7">Cell membrane</location>
        <topology evidence="3 4">Multi-pass membrane protein</topology>
    </subcellularLocation>
</comment>
<comment type="alternative products">
    <event type="alternative splicing"/>
    <isoform>
        <id>P57695-1</id>
        <name>a</name>
        <sequence type="displayed"/>
    </isoform>
    <isoform>
        <id>P57695-2</id>
        <name>b</name>
        <sequence type="described" ref="VSP_021141"/>
    </isoform>
</comment>
<comment type="tissue specificity">
    <text evidence="7">Detected on spinal cord neurons (at protein level). Detected in spinal cord.</text>
</comment>
<comment type="domain">
    <text evidence="1 3">The channel pore is formed by pentameric assembly of the second transmembrane domain from all five subunits. In the absence of the extracellular domain, the channel is in a constitutively open conformation (By similarity). Channel opening is effected by an outward rotation of the transmembrane domains that increases the diameter of the pore (By similarity).</text>
</comment>
<comment type="disease">
    <text evidence="7">Defects in GLRA1 are the cause of inherited congenital myoclonus of Poll Hereford calves. It is an autosomal recessive disease characterized by hyperesthesia and myoclonic jerks of the skeletal musculature that occur both spontaneously and in response to sensory stimuli.</text>
</comment>
<comment type="miscellaneous">
    <text evidence="10">The alpha subunit binds strychnine.</text>
</comment>
<comment type="similarity">
    <text evidence="9">Belongs to the ligand-gated ion channel (TC 1.A.9) family. Glycine receptor (TC 1.A.9.3) subfamily. GLRA1 sub-subfamily.</text>
</comment>
<sequence length="457" mass="52614">MYSFNTLRLYLWETIVFFSLAASKEAEAARSASKPMSPSDFLDKLMGRTSGYDARIRPNFKGPPVNVSCNIFINSFGSIAETTMDYRVNIFLRQQWNDPRLAYNEYPDDSLDLDPSMLDSIWKPDLFFANEKGAHFHEITTDNKLLRISRNGNVLYSIRITLTLACPMDLKNFPMDVQTCIMQLESFGYTMNDLIFEWQEQGAVQVADGLTLPQFILKEEKDLRYCTKHYNTGKFTCIEARFHLERQMGYYLIQMYIPSLLIVILSWISFWINMDAAPARVGLGITTVLTMTTQSSGSRASLPKVSYVKAIDIWMAVCLLFVFSALLEYAAVNFVSRQHKELLRFRRKRRHHKSPMLNLFQEDEAGEGRFNFSAYGMGPACLQAKDGISVKGANNSNTTNPPPAPSKSPEEMRKLFIQRAKKIDKISRIGFPMAFLIFNMFYWIIYKIVRREDVHNQ</sequence>
<reference key="1">
    <citation type="journal article" date="2001" name="Mol. Cell. Neurosci.">
        <title>A nonsense mutation in the alpha1 subunit of the inhibitory glycine receptor associated with bovine myoclonus.</title>
        <authorList>
            <person name="Pierce K.D."/>
            <person name="Handford C.A."/>
            <person name="Morris R."/>
            <person name="Vafa B."/>
            <person name="Dennis J.A."/>
            <person name="Healy P.J."/>
            <person name="Schofield P.R."/>
        </authorList>
    </citation>
    <scope>NUCLEOTIDE SEQUENCE [GENOMIC DNA / MRNA] (ISOFORMS A AND B)</scope>
    <scope>DISEASE</scope>
    <scope>SUBCELLULAR LOCATION</scope>
    <scope>TISSUE SPECIFICITY</scope>
    <scope>FUNCTION</scope>
</reference>
<protein>
    <recommendedName>
        <fullName>Glycine receptor subunit alpha-1</fullName>
    </recommendedName>
    <alternativeName>
        <fullName>Glycine receptor 48 kDa subunit</fullName>
    </alternativeName>
    <alternativeName>
        <fullName>Glycine receptor strychnine-binding subunit</fullName>
    </alternativeName>
</protein>
<proteinExistence type="evidence at protein level"/>
<accession>P57695</accession>
<accession>Q9GKE9</accession>
<accession>Q9GKF0</accession>
<dbReference type="EMBL" id="AF268375">
    <property type="protein sequence ID" value="AAG14346.1"/>
    <property type="molecule type" value="mRNA"/>
</dbReference>
<dbReference type="EMBL" id="AF268366">
    <property type="protein sequence ID" value="AAG41140.1"/>
    <property type="molecule type" value="Genomic_DNA"/>
</dbReference>
<dbReference type="EMBL" id="AF268358">
    <property type="protein sequence ID" value="AAG41140.1"/>
    <property type="status" value="JOINED"/>
    <property type="molecule type" value="Genomic_DNA"/>
</dbReference>
<dbReference type="EMBL" id="AF268360">
    <property type="protein sequence ID" value="AAG41140.1"/>
    <property type="status" value="JOINED"/>
    <property type="molecule type" value="Genomic_DNA"/>
</dbReference>
<dbReference type="EMBL" id="AF268361">
    <property type="protein sequence ID" value="AAG41140.1"/>
    <property type="status" value="JOINED"/>
    <property type="molecule type" value="Genomic_DNA"/>
</dbReference>
<dbReference type="EMBL" id="AF268359">
    <property type="protein sequence ID" value="AAG41140.1"/>
    <property type="status" value="JOINED"/>
    <property type="molecule type" value="Genomic_DNA"/>
</dbReference>
<dbReference type="EMBL" id="AF268362">
    <property type="protein sequence ID" value="AAG41140.1"/>
    <property type="status" value="JOINED"/>
    <property type="molecule type" value="Genomic_DNA"/>
</dbReference>
<dbReference type="EMBL" id="AF268364">
    <property type="protein sequence ID" value="AAG41140.1"/>
    <property type="status" value="JOINED"/>
    <property type="molecule type" value="Genomic_DNA"/>
</dbReference>
<dbReference type="EMBL" id="AF268365">
    <property type="protein sequence ID" value="AAG41140.1"/>
    <property type="status" value="JOINED"/>
    <property type="molecule type" value="Genomic_DNA"/>
</dbReference>
<dbReference type="EMBL" id="AF268363">
    <property type="protein sequence ID" value="AAG41140.1"/>
    <property type="status" value="JOINED"/>
    <property type="molecule type" value="Genomic_DNA"/>
</dbReference>
<dbReference type="EMBL" id="AF268366">
    <property type="protein sequence ID" value="AAG41141.1"/>
    <property type="molecule type" value="Genomic_DNA"/>
</dbReference>
<dbReference type="EMBL" id="AF268358">
    <property type="protein sequence ID" value="AAG41141.1"/>
    <property type="status" value="JOINED"/>
    <property type="molecule type" value="Genomic_DNA"/>
</dbReference>
<dbReference type="EMBL" id="AF268360">
    <property type="protein sequence ID" value="AAG41141.1"/>
    <property type="status" value="JOINED"/>
    <property type="molecule type" value="Genomic_DNA"/>
</dbReference>
<dbReference type="EMBL" id="AF268361">
    <property type="protein sequence ID" value="AAG41141.1"/>
    <property type="status" value="JOINED"/>
    <property type="molecule type" value="Genomic_DNA"/>
</dbReference>
<dbReference type="EMBL" id="AF268359">
    <property type="protein sequence ID" value="AAG41141.1"/>
    <property type="status" value="JOINED"/>
    <property type="molecule type" value="Genomic_DNA"/>
</dbReference>
<dbReference type="EMBL" id="AF268362">
    <property type="protein sequence ID" value="AAG41141.1"/>
    <property type="status" value="JOINED"/>
    <property type="molecule type" value="Genomic_DNA"/>
</dbReference>
<dbReference type="EMBL" id="AF268364">
    <property type="protein sequence ID" value="AAG41141.1"/>
    <property type="status" value="JOINED"/>
    <property type="molecule type" value="Genomic_DNA"/>
</dbReference>
<dbReference type="EMBL" id="AF268365">
    <property type="protein sequence ID" value="AAG41141.1"/>
    <property type="status" value="JOINED"/>
    <property type="molecule type" value="Genomic_DNA"/>
</dbReference>
<dbReference type="EMBL" id="AF268363">
    <property type="protein sequence ID" value="AAG41141.1"/>
    <property type="status" value="JOINED"/>
    <property type="molecule type" value="Genomic_DNA"/>
</dbReference>
<dbReference type="RefSeq" id="NP_776746.1">
    <molecule id="P57695-1"/>
    <property type="nucleotide sequence ID" value="NM_174321.2"/>
</dbReference>
<dbReference type="BMRB" id="P57695"/>
<dbReference type="SMR" id="P57695"/>
<dbReference type="FunCoup" id="P57695">
    <property type="interactions" value="492"/>
</dbReference>
<dbReference type="STRING" id="9913.ENSBTAP00000019143"/>
<dbReference type="GlyCosmos" id="P57695">
    <property type="glycosylation" value="1 site, No reported glycans"/>
</dbReference>
<dbReference type="GlyGen" id="P57695">
    <property type="glycosylation" value="1 site"/>
</dbReference>
<dbReference type="PaxDb" id="9913-ENSBTAP00000019143"/>
<dbReference type="Ensembl" id="ENSBTAT00000019143.4">
    <molecule id="P57695-1"/>
    <property type="protein sequence ID" value="ENSBTAP00000019143.3"/>
    <property type="gene ID" value="ENSBTAG00000014395.5"/>
</dbReference>
<dbReference type="GeneID" id="281783"/>
<dbReference type="KEGG" id="bta:281783"/>
<dbReference type="CTD" id="2741"/>
<dbReference type="VEuPathDB" id="HostDB:ENSBTAG00000014395"/>
<dbReference type="eggNOG" id="KOG3644">
    <property type="taxonomic scope" value="Eukaryota"/>
</dbReference>
<dbReference type="GeneTree" id="ENSGT00940000159047"/>
<dbReference type="HOGENOM" id="CLU_010920_1_4_1"/>
<dbReference type="InParanoid" id="P57695"/>
<dbReference type="OMA" id="CELHMQP"/>
<dbReference type="OrthoDB" id="407674at2759"/>
<dbReference type="TreeFam" id="TF315453"/>
<dbReference type="Reactome" id="R-BTA-112314">
    <property type="pathway name" value="Neurotransmitter receptors and postsynaptic signal transmission"/>
</dbReference>
<dbReference type="Proteomes" id="UP000009136">
    <property type="component" value="Chromosome 7"/>
</dbReference>
<dbReference type="Bgee" id="ENSBTAG00000014395">
    <property type="expression patterns" value="Expressed in oocyte and 10 other cell types or tissues"/>
</dbReference>
<dbReference type="GO" id="GO:0034707">
    <property type="term" value="C:chloride channel complex"/>
    <property type="evidence" value="ECO:0007669"/>
    <property type="project" value="UniProtKB-KW"/>
</dbReference>
<dbReference type="GO" id="GO:0030425">
    <property type="term" value="C:dendrite"/>
    <property type="evidence" value="ECO:0007669"/>
    <property type="project" value="UniProtKB-SubCell"/>
</dbReference>
<dbReference type="GO" id="GO:0009897">
    <property type="term" value="C:external side of plasma membrane"/>
    <property type="evidence" value="ECO:0007669"/>
    <property type="project" value="Ensembl"/>
</dbReference>
<dbReference type="GO" id="GO:0098690">
    <property type="term" value="C:glycinergic synapse"/>
    <property type="evidence" value="ECO:0007669"/>
    <property type="project" value="Ensembl"/>
</dbReference>
<dbReference type="GO" id="GO:0060077">
    <property type="term" value="C:inhibitory synapse"/>
    <property type="evidence" value="ECO:0007669"/>
    <property type="project" value="Ensembl"/>
</dbReference>
<dbReference type="GO" id="GO:0043231">
    <property type="term" value="C:intracellular membrane-bounded organelle"/>
    <property type="evidence" value="ECO:0000250"/>
    <property type="project" value="UniProtKB"/>
</dbReference>
<dbReference type="GO" id="GO:0043005">
    <property type="term" value="C:neuron projection"/>
    <property type="evidence" value="ECO:0000250"/>
    <property type="project" value="UniProtKB"/>
</dbReference>
<dbReference type="GO" id="GO:0043025">
    <property type="term" value="C:neuronal cell body"/>
    <property type="evidence" value="ECO:0000250"/>
    <property type="project" value="UniProtKB"/>
</dbReference>
<dbReference type="GO" id="GO:0043204">
    <property type="term" value="C:perikaryon"/>
    <property type="evidence" value="ECO:0007669"/>
    <property type="project" value="UniProtKB-SubCell"/>
</dbReference>
<dbReference type="GO" id="GO:0005886">
    <property type="term" value="C:plasma membrane"/>
    <property type="evidence" value="ECO:0000250"/>
    <property type="project" value="UniProtKB"/>
</dbReference>
<dbReference type="GO" id="GO:0045211">
    <property type="term" value="C:postsynaptic membrane"/>
    <property type="evidence" value="ECO:0007669"/>
    <property type="project" value="UniProtKB-SubCell"/>
</dbReference>
<dbReference type="GO" id="GO:0045202">
    <property type="term" value="C:synapse"/>
    <property type="evidence" value="ECO:0000250"/>
    <property type="project" value="UniProtKB"/>
</dbReference>
<dbReference type="GO" id="GO:0016934">
    <property type="term" value="F:extracellularly glycine-gated chloride channel activity"/>
    <property type="evidence" value="ECO:0000250"/>
    <property type="project" value="UniProtKB"/>
</dbReference>
<dbReference type="GO" id="GO:0016594">
    <property type="term" value="F:glycine binding"/>
    <property type="evidence" value="ECO:0000250"/>
    <property type="project" value="UniProtKB"/>
</dbReference>
<dbReference type="GO" id="GO:0099507">
    <property type="term" value="F:ligand-gated monoatomic ion channel activity involved in regulation of presynaptic membrane potential"/>
    <property type="evidence" value="ECO:0007669"/>
    <property type="project" value="Ensembl"/>
</dbReference>
<dbReference type="GO" id="GO:0030977">
    <property type="term" value="F:taurine binding"/>
    <property type="evidence" value="ECO:0000250"/>
    <property type="project" value="UniProtKB"/>
</dbReference>
<dbReference type="GO" id="GO:0004888">
    <property type="term" value="F:transmembrane signaling receptor activity"/>
    <property type="evidence" value="ECO:0007669"/>
    <property type="project" value="InterPro"/>
</dbReference>
<dbReference type="GO" id="GO:1904315">
    <property type="term" value="F:transmitter-gated monoatomic ion channel activity involved in regulation of postsynaptic membrane potential"/>
    <property type="evidence" value="ECO:0007669"/>
    <property type="project" value="Ensembl"/>
</dbReference>
<dbReference type="GO" id="GO:0008270">
    <property type="term" value="F:zinc ion binding"/>
    <property type="evidence" value="ECO:0000250"/>
    <property type="project" value="UniProtKB"/>
</dbReference>
<dbReference type="GO" id="GO:0007340">
    <property type="term" value="P:acrosome reaction"/>
    <property type="evidence" value="ECO:0007669"/>
    <property type="project" value="Ensembl"/>
</dbReference>
<dbReference type="GO" id="GO:0007628">
    <property type="term" value="P:adult walking behavior"/>
    <property type="evidence" value="ECO:0007669"/>
    <property type="project" value="Ensembl"/>
</dbReference>
<dbReference type="GO" id="GO:0071230">
    <property type="term" value="P:cellular response to amino acid stimulus"/>
    <property type="evidence" value="ECO:0000250"/>
    <property type="project" value="UniProtKB"/>
</dbReference>
<dbReference type="GO" id="GO:0071361">
    <property type="term" value="P:cellular response to ethanol"/>
    <property type="evidence" value="ECO:0000250"/>
    <property type="project" value="UniProtKB"/>
</dbReference>
<dbReference type="GO" id="GO:0071294">
    <property type="term" value="P:cellular response to zinc ion"/>
    <property type="evidence" value="ECO:0000250"/>
    <property type="project" value="UniProtKB"/>
</dbReference>
<dbReference type="GO" id="GO:1902476">
    <property type="term" value="P:chloride transmembrane transport"/>
    <property type="evidence" value="ECO:0000318"/>
    <property type="project" value="GO_Central"/>
</dbReference>
<dbReference type="GO" id="GO:0006821">
    <property type="term" value="P:chloride transport"/>
    <property type="evidence" value="ECO:0000250"/>
    <property type="project" value="UniProtKB"/>
</dbReference>
<dbReference type="GO" id="GO:0060080">
    <property type="term" value="P:inhibitory postsynaptic potential"/>
    <property type="evidence" value="ECO:0000250"/>
    <property type="project" value="UniProtKB"/>
</dbReference>
<dbReference type="GO" id="GO:0006811">
    <property type="term" value="P:monoatomic ion transport"/>
    <property type="evidence" value="ECO:0000250"/>
    <property type="project" value="UniProtKB"/>
</dbReference>
<dbReference type="GO" id="GO:0006936">
    <property type="term" value="P:muscle contraction"/>
    <property type="evidence" value="ECO:0000250"/>
    <property type="project" value="UniProtKB"/>
</dbReference>
<dbReference type="GO" id="GO:0051970">
    <property type="term" value="P:negative regulation of transmission of nerve impulse"/>
    <property type="evidence" value="ECO:0000250"/>
    <property type="project" value="UniProtKB"/>
</dbReference>
<dbReference type="GO" id="GO:0050884">
    <property type="term" value="P:neuromuscular process controlling posture"/>
    <property type="evidence" value="ECO:0007669"/>
    <property type="project" value="Ensembl"/>
</dbReference>
<dbReference type="GO" id="GO:0019228">
    <property type="term" value="P:neuronal action potential"/>
    <property type="evidence" value="ECO:0007669"/>
    <property type="project" value="Ensembl"/>
</dbReference>
<dbReference type="GO" id="GO:0007218">
    <property type="term" value="P:neuropeptide signaling pathway"/>
    <property type="evidence" value="ECO:0000250"/>
    <property type="project" value="UniProtKB"/>
</dbReference>
<dbReference type="GO" id="GO:2000344">
    <property type="term" value="P:positive regulation of acrosome reaction"/>
    <property type="evidence" value="ECO:0007669"/>
    <property type="project" value="Ensembl"/>
</dbReference>
<dbReference type="GO" id="GO:0002087">
    <property type="term" value="P:regulation of respiratory gaseous exchange by nervous system process"/>
    <property type="evidence" value="ECO:0007669"/>
    <property type="project" value="Ensembl"/>
</dbReference>
<dbReference type="GO" id="GO:0097305">
    <property type="term" value="P:response to alcohol"/>
    <property type="evidence" value="ECO:0000250"/>
    <property type="project" value="UniProtKB"/>
</dbReference>
<dbReference type="GO" id="GO:0060013">
    <property type="term" value="P:righting reflex"/>
    <property type="evidence" value="ECO:0007669"/>
    <property type="project" value="Ensembl"/>
</dbReference>
<dbReference type="GO" id="GO:0001964">
    <property type="term" value="P:startle response"/>
    <property type="evidence" value="ECO:0000250"/>
    <property type="project" value="UniProtKB"/>
</dbReference>
<dbReference type="GO" id="GO:0060012">
    <property type="term" value="P:synaptic transmission, glycinergic"/>
    <property type="evidence" value="ECO:0000250"/>
    <property type="project" value="UniProtKB"/>
</dbReference>
<dbReference type="GO" id="GO:0007601">
    <property type="term" value="P:visual perception"/>
    <property type="evidence" value="ECO:0007669"/>
    <property type="project" value="Ensembl"/>
</dbReference>
<dbReference type="CDD" id="cd19009">
    <property type="entry name" value="LGIC_ECD_GlyR_alpha"/>
    <property type="match status" value="1"/>
</dbReference>
<dbReference type="CDD" id="cd19060">
    <property type="entry name" value="LGIC_TM_GlyR_alpha"/>
    <property type="match status" value="1"/>
</dbReference>
<dbReference type="FunFam" id="2.70.170.10:FF:000002">
    <property type="entry name" value="Glycine receptor alpha 1 subunit"/>
    <property type="match status" value="1"/>
</dbReference>
<dbReference type="FunFam" id="1.20.58.390:FF:000003">
    <property type="entry name" value="Glycine receptor alpha 2 subunit"/>
    <property type="match status" value="1"/>
</dbReference>
<dbReference type="Gene3D" id="2.70.170.10">
    <property type="entry name" value="Neurotransmitter-gated ion-channel ligand-binding domain"/>
    <property type="match status" value="1"/>
</dbReference>
<dbReference type="Gene3D" id="1.20.58.390">
    <property type="entry name" value="Neurotransmitter-gated ion-channel transmembrane domain"/>
    <property type="match status" value="1"/>
</dbReference>
<dbReference type="InterPro" id="IPR006028">
    <property type="entry name" value="GABAA/Glycine_rcpt"/>
</dbReference>
<dbReference type="InterPro" id="IPR008127">
    <property type="entry name" value="Glycine_rcpt_A"/>
</dbReference>
<dbReference type="InterPro" id="IPR008128">
    <property type="entry name" value="Glycine_rcpt_A1"/>
</dbReference>
<dbReference type="InterPro" id="IPR006202">
    <property type="entry name" value="Neur_chan_lig-bd"/>
</dbReference>
<dbReference type="InterPro" id="IPR036734">
    <property type="entry name" value="Neur_chan_lig-bd_sf"/>
</dbReference>
<dbReference type="InterPro" id="IPR006201">
    <property type="entry name" value="Neur_channel"/>
</dbReference>
<dbReference type="InterPro" id="IPR036719">
    <property type="entry name" value="Neuro-gated_channel_TM_sf"/>
</dbReference>
<dbReference type="InterPro" id="IPR038050">
    <property type="entry name" value="Neuro_actylchol_rec"/>
</dbReference>
<dbReference type="InterPro" id="IPR006029">
    <property type="entry name" value="Neurotrans-gated_channel_TM"/>
</dbReference>
<dbReference type="InterPro" id="IPR018000">
    <property type="entry name" value="Neurotransmitter_ion_chnl_CS"/>
</dbReference>
<dbReference type="NCBIfam" id="TIGR00860">
    <property type="entry name" value="LIC"/>
    <property type="match status" value="1"/>
</dbReference>
<dbReference type="PANTHER" id="PTHR18945">
    <property type="entry name" value="NEUROTRANSMITTER GATED ION CHANNEL"/>
    <property type="match status" value="1"/>
</dbReference>
<dbReference type="Pfam" id="PF02931">
    <property type="entry name" value="Neur_chan_LBD"/>
    <property type="match status" value="1"/>
</dbReference>
<dbReference type="Pfam" id="PF02932">
    <property type="entry name" value="Neur_chan_memb"/>
    <property type="match status" value="1"/>
</dbReference>
<dbReference type="PRINTS" id="PR00253">
    <property type="entry name" value="GABAARECEPTR"/>
</dbReference>
<dbReference type="PRINTS" id="PR01673">
    <property type="entry name" value="GLYRALPHA"/>
</dbReference>
<dbReference type="PRINTS" id="PR01674">
    <property type="entry name" value="GLYRALPHA1"/>
</dbReference>
<dbReference type="PRINTS" id="PR00252">
    <property type="entry name" value="NRIONCHANNEL"/>
</dbReference>
<dbReference type="SUPFAM" id="SSF90112">
    <property type="entry name" value="Neurotransmitter-gated ion-channel transmembrane pore"/>
    <property type="match status" value="1"/>
</dbReference>
<dbReference type="SUPFAM" id="SSF63712">
    <property type="entry name" value="Nicotinic receptor ligand binding domain-like"/>
    <property type="match status" value="1"/>
</dbReference>
<dbReference type="PROSITE" id="PS00236">
    <property type="entry name" value="NEUROTR_ION_CHANNEL"/>
    <property type="match status" value="1"/>
</dbReference>
<gene>
    <name type="primary">GLRA1</name>
</gene>
<evidence type="ECO:0000250" key="1">
    <source>
        <dbReference type="UniProtKB" id="O93430"/>
    </source>
</evidence>
<evidence type="ECO:0000250" key="2">
    <source>
        <dbReference type="UniProtKB" id="P07727"/>
    </source>
</evidence>
<evidence type="ECO:0000250" key="3">
    <source>
        <dbReference type="UniProtKB" id="P23415"/>
    </source>
</evidence>
<evidence type="ECO:0000250" key="4">
    <source>
        <dbReference type="UniProtKB" id="Q64018"/>
    </source>
</evidence>
<evidence type="ECO:0000255" key="5"/>
<evidence type="ECO:0000256" key="6">
    <source>
        <dbReference type="SAM" id="MobiDB-lite"/>
    </source>
</evidence>
<evidence type="ECO:0000269" key="7">
    <source>
    </source>
</evidence>
<evidence type="ECO:0000303" key="8">
    <source>
    </source>
</evidence>
<evidence type="ECO:0000305" key="9"/>
<evidence type="ECO:0000305" key="10">
    <source>
    </source>
</evidence>
<name>GLRA1_BOVIN</name>
<feature type="signal peptide" evidence="2">
    <location>
        <begin position="1"/>
        <end position="28"/>
    </location>
</feature>
<feature type="chain" id="PRO_0000000411" description="Glycine receptor subunit alpha-1">
    <location>
        <begin position="29"/>
        <end position="457"/>
    </location>
</feature>
<feature type="topological domain" description="Extracellular" evidence="1">
    <location>
        <begin position="29"/>
        <end position="250"/>
    </location>
</feature>
<feature type="transmembrane region" description="Helical; Name=1" evidence="1">
    <location>
        <begin position="251"/>
        <end position="272"/>
    </location>
</feature>
<feature type="topological domain" description="Cytoplasmic" evidence="1">
    <location>
        <begin position="273"/>
        <end position="277"/>
    </location>
</feature>
<feature type="transmembrane region" description="Helical; Name=2" evidence="1">
    <location>
        <begin position="278"/>
        <end position="298"/>
    </location>
</feature>
<feature type="topological domain" description="Extracellular" evidence="1">
    <location>
        <begin position="299"/>
        <end position="309"/>
    </location>
</feature>
<feature type="transmembrane region" description="Helical; Name=3" evidence="1">
    <location>
        <begin position="310"/>
        <end position="330"/>
    </location>
</feature>
<feature type="topological domain" description="Cytoplasmic" evidence="1">
    <location>
        <begin position="331"/>
        <end position="425"/>
    </location>
</feature>
<feature type="transmembrane region" description="Helical; Name=4" evidence="1">
    <location>
        <begin position="426"/>
        <end position="446"/>
    </location>
</feature>
<feature type="topological domain" description="Extracellular" evidence="1">
    <location>
        <begin position="447"/>
        <end position="457"/>
    </location>
</feature>
<feature type="region of interest" description="Disordered" evidence="6">
    <location>
        <begin position="391"/>
        <end position="410"/>
    </location>
</feature>
<feature type="binding site" evidence="3">
    <location>
        <position position="93"/>
    </location>
    <ligand>
        <name>glycine</name>
        <dbReference type="ChEBI" id="CHEBI:57305"/>
        <label>1</label>
        <note>agonist</note>
    </ligand>
</feature>
<feature type="binding site" evidence="3">
    <location>
        <position position="157"/>
    </location>
    <ligand>
        <name>glycine</name>
        <dbReference type="ChEBI" id="CHEBI:57305"/>
        <label>1</label>
        <note>agonist</note>
    </ligand>
</feature>
<feature type="binding site" evidence="3">
    <location>
        <position position="220"/>
    </location>
    <ligand>
        <name>Zn(2+)</name>
        <dbReference type="ChEBI" id="CHEBI:29105"/>
    </ligand>
</feature>
<feature type="binding site" evidence="3">
    <location>
        <position position="222"/>
    </location>
    <ligand>
        <name>Zn(2+)</name>
        <dbReference type="ChEBI" id="CHEBI:29105"/>
    </ligand>
</feature>
<feature type="binding site" evidence="1">
    <location>
        <begin position="230"/>
        <end position="235"/>
    </location>
    <ligand>
        <name>strychnine</name>
        <dbReference type="ChEBI" id="CHEBI:90700"/>
        <note>antagonist</note>
    </ligand>
</feature>
<feature type="binding site" evidence="3">
    <location>
        <position position="232"/>
    </location>
    <ligand>
        <name>glycine</name>
        <dbReference type="ChEBI" id="CHEBI:57305"/>
        <label>2</label>
        <note>agonist; ligand shared with an adjacent GLRB subunit</note>
    </ligand>
</feature>
<feature type="binding site" evidence="3">
    <location>
        <position position="243"/>
    </location>
    <ligand>
        <name>Zn(2+)</name>
        <dbReference type="ChEBI" id="CHEBI:29105"/>
    </ligand>
</feature>
<feature type="site" description="Important for obstruction of the ion pore in the closed conformation" evidence="1">
    <location>
        <position position="289"/>
    </location>
</feature>
<feature type="glycosylation site" description="N-linked (GlcNAc...) asparagine" evidence="5">
    <location>
        <position position="66"/>
    </location>
</feature>
<feature type="disulfide bond" evidence="3">
    <location>
        <begin position="166"/>
        <end position="180"/>
    </location>
</feature>
<feature type="disulfide bond" evidence="3">
    <location>
        <begin position="226"/>
        <end position="237"/>
    </location>
</feature>
<feature type="splice variant" id="VSP_021141" description="In isoform b." evidence="8">
    <location>
        <begin position="354"/>
        <end position="361"/>
    </location>
</feature>